<sequence length="147" mass="15699">MTIVCELESGADLPEYATEGASGADLRAHIEEPIAVLPGQRVLIPTGIKMQIPQGYEVQVRPRSGLALKHGIMVVNSPGTIDADYRGEVCIILANFGESTFIIEPKMRIAQAVVAPVVQAKFIVVDQEEGLTATSRGSRGFGHTGEK</sequence>
<protein>
    <recommendedName>
        <fullName evidence="1">Deoxyuridine 5'-triphosphate nucleotidohydrolase</fullName>
        <shortName evidence="1">dUTPase</shortName>
        <ecNumber evidence="1">3.6.1.23</ecNumber>
    </recommendedName>
    <alternativeName>
        <fullName evidence="1">dUTP pyrophosphatase</fullName>
    </alternativeName>
</protein>
<organism>
    <name type="scientific">Chlamydia caviae (strain ATCC VR-813 / DSM 19441 / 03DC25 / GPIC)</name>
    <name type="common">Chlamydophila caviae</name>
    <dbReference type="NCBI Taxonomy" id="227941"/>
    <lineage>
        <taxon>Bacteria</taxon>
        <taxon>Pseudomonadati</taxon>
        <taxon>Chlamydiota</taxon>
        <taxon>Chlamydiia</taxon>
        <taxon>Chlamydiales</taxon>
        <taxon>Chlamydiaceae</taxon>
        <taxon>Chlamydia/Chlamydophila group</taxon>
        <taxon>Chlamydia</taxon>
    </lineage>
</organism>
<keyword id="KW-0378">Hydrolase</keyword>
<keyword id="KW-0460">Magnesium</keyword>
<keyword id="KW-0479">Metal-binding</keyword>
<keyword id="KW-0546">Nucleotide metabolism</keyword>
<evidence type="ECO:0000255" key="1">
    <source>
        <dbReference type="HAMAP-Rule" id="MF_00116"/>
    </source>
</evidence>
<proteinExistence type="inferred from homology"/>
<name>DUT_CHLCV</name>
<accession>Q823Q9</accession>
<reference key="1">
    <citation type="journal article" date="2003" name="Nucleic Acids Res.">
        <title>Genome sequence of Chlamydophila caviae (Chlamydia psittaci GPIC): examining the role of niche-specific genes in the evolution of the Chlamydiaceae.</title>
        <authorList>
            <person name="Read T.D."/>
            <person name="Myers G.S.A."/>
            <person name="Brunham R.C."/>
            <person name="Nelson W.C."/>
            <person name="Paulsen I.T."/>
            <person name="Heidelberg J.F."/>
            <person name="Holtzapple E.K."/>
            <person name="Khouri H.M."/>
            <person name="Federova N.B."/>
            <person name="Carty H.A."/>
            <person name="Umayam L.A."/>
            <person name="Haft D.H."/>
            <person name="Peterson J.D."/>
            <person name="Beanan M.J."/>
            <person name="White O."/>
            <person name="Salzberg S.L."/>
            <person name="Hsia R.-C."/>
            <person name="McClarty G."/>
            <person name="Rank R.G."/>
            <person name="Bavoil P.M."/>
            <person name="Fraser C.M."/>
        </authorList>
    </citation>
    <scope>NUCLEOTIDE SEQUENCE [LARGE SCALE GENOMIC DNA]</scope>
    <source>
        <strain>ATCC VR-813 / DSM 19441 / 03DC25 / GPIC</strain>
    </source>
</reference>
<feature type="chain" id="PRO_0000182844" description="Deoxyuridine 5'-triphosphate nucleotidohydrolase">
    <location>
        <begin position="1"/>
        <end position="147"/>
    </location>
</feature>
<feature type="binding site" evidence="1">
    <location>
        <begin position="63"/>
        <end position="65"/>
    </location>
    <ligand>
        <name>substrate</name>
    </ligand>
</feature>
<feature type="binding site" evidence="1">
    <location>
        <position position="76"/>
    </location>
    <ligand>
        <name>substrate</name>
    </ligand>
</feature>
<feature type="binding site" evidence="1">
    <location>
        <begin position="80"/>
        <end position="82"/>
    </location>
    <ligand>
        <name>substrate</name>
    </ligand>
</feature>
<comment type="function">
    <text evidence="1">This enzyme is involved in nucleotide metabolism: it produces dUMP, the immediate precursor of thymidine nucleotides and it decreases the intracellular concentration of dUTP so that uracil cannot be incorporated into DNA.</text>
</comment>
<comment type="catalytic activity">
    <reaction evidence="1">
        <text>dUTP + H2O = dUMP + diphosphate + H(+)</text>
        <dbReference type="Rhea" id="RHEA:10248"/>
        <dbReference type="ChEBI" id="CHEBI:15377"/>
        <dbReference type="ChEBI" id="CHEBI:15378"/>
        <dbReference type="ChEBI" id="CHEBI:33019"/>
        <dbReference type="ChEBI" id="CHEBI:61555"/>
        <dbReference type="ChEBI" id="CHEBI:246422"/>
        <dbReference type="EC" id="3.6.1.23"/>
    </reaction>
</comment>
<comment type="cofactor">
    <cofactor evidence="1">
        <name>Mg(2+)</name>
        <dbReference type="ChEBI" id="CHEBI:18420"/>
    </cofactor>
</comment>
<comment type="pathway">
    <text evidence="1">Pyrimidine metabolism; dUMP biosynthesis; dUMP from dCTP (dUTP route): step 2/2.</text>
</comment>
<comment type="similarity">
    <text evidence="1">Belongs to the dUTPase family.</text>
</comment>
<gene>
    <name evidence="1" type="primary">dut</name>
    <name type="ordered locus">CCA_00347</name>
</gene>
<dbReference type="EC" id="3.6.1.23" evidence="1"/>
<dbReference type="EMBL" id="AE015925">
    <property type="protein sequence ID" value="AAP05095.1"/>
    <property type="molecule type" value="Genomic_DNA"/>
</dbReference>
<dbReference type="RefSeq" id="WP_011006312.1">
    <property type="nucleotide sequence ID" value="NC_003361.3"/>
</dbReference>
<dbReference type="SMR" id="Q823Q9"/>
<dbReference type="STRING" id="227941.CCA_00347"/>
<dbReference type="KEGG" id="cca:CCA_00347"/>
<dbReference type="eggNOG" id="COG0756">
    <property type="taxonomic scope" value="Bacteria"/>
</dbReference>
<dbReference type="HOGENOM" id="CLU_068508_1_2_0"/>
<dbReference type="OrthoDB" id="9809956at2"/>
<dbReference type="UniPathway" id="UPA00610">
    <property type="reaction ID" value="UER00666"/>
</dbReference>
<dbReference type="Proteomes" id="UP000002193">
    <property type="component" value="Chromosome"/>
</dbReference>
<dbReference type="GO" id="GO:0004170">
    <property type="term" value="F:dUTP diphosphatase activity"/>
    <property type="evidence" value="ECO:0007669"/>
    <property type="project" value="UniProtKB-UniRule"/>
</dbReference>
<dbReference type="GO" id="GO:0000287">
    <property type="term" value="F:magnesium ion binding"/>
    <property type="evidence" value="ECO:0007669"/>
    <property type="project" value="UniProtKB-UniRule"/>
</dbReference>
<dbReference type="GO" id="GO:0006226">
    <property type="term" value="P:dUMP biosynthetic process"/>
    <property type="evidence" value="ECO:0007669"/>
    <property type="project" value="UniProtKB-UniRule"/>
</dbReference>
<dbReference type="GO" id="GO:0046081">
    <property type="term" value="P:dUTP catabolic process"/>
    <property type="evidence" value="ECO:0007669"/>
    <property type="project" value="InterPro"/>
</dbReference>
<dbReference type="CDD" id="cd07557">
    <property type="entry name" value="trimeric_dUTPase"/>
    <property type="match status" value="1"/>
</dbReference>
<dbReference type="Gene3D" id="2.70.40.10">
    <property type="match status" value="1"/>
</dbReference>
<dbReference type="HAMAP" id="MF_00116">
    <property type="entry name" value="dUTPase_bact"/>
    <property type="match status" value="1"/>
</dbReference>
<dbReference type="InterPro" id="IPR008181">
    <property type="entry name" value="dUTPase"/>
</dbReference>
<dbReference type="InterPro" id="IPR029054">
    <property type="entry name" value="dUTPase-like"/>
</dbReference>
<dbReference type="InterPro" id="IPR036157">
    <property type="entry name" value="dUTPase-like_sf"/>
</dbReference>
<dbReference type="InterPro" id="IPR033704">
    <property type="entry name" value="dUTPase_trimeric"/>
</dbReference>
<dbReference type="NCBIfam" id="TIGR00576">
    <property type="entry name" value="dut"/>
    <property type="match status" value="1"/>
</dbReference>
<dbReference type="NCBIfam" id="NF001862">
    <property type="entry name" value="PRK00601.1"/>
    <property type="match status" value="1"/>
</dbReference>
<dbReference type="PANTHER" id="PTHR11241">
    <property type="entry name" value="DEOXYURIDINE 5'-TRIPHOSPHATE NUCLEOTIDOHYDROLASE"/>
    <property type="match status" value="1"/>
</dbReference>
<dbReference type="PANTHER" id="PTHR11241:SF0">
    <property type="entry name" value="DEOXYURIDINE 5'-TRIPHOSPHATE NUCLEOTIDOHYDROLASE"/>
    <property type="match status" value="1"/>
</dbReference>
<dbReference type="Pfam" id="PF00692">
    <property type="entry name" value="dUTPase"/>
    <property type="match status" value="1"/>
</dbReference>
<dbReference type="SUPFAM" id="SSF51283">
    <property type="entry name" value="dUTPase-like"/>
    <property type="match status" value="1"/>
</dbReference>